<keyword id="KW-0131">Cell cycle</keyword>
<keyword id="KW-0132">Cell division</keyword>
<keyword id="KW-0159">Chromosome partition</keyword>
<keyword id="KW-0963">Cytoplasm</keyword>
<keyword id="KW-0229">DNA integration</keyword>
<keyword id="KW-0233">DNA recombination</keyword>
<keyword id="KW-0238">DNA-binding</keyword>
<keyword id="KW-1185">Reference proteome</keyword>
<protein>
    <recommendedName>
        <fullName evidence="1">Tyrosine recombinase XerD</fullName>
    </recommendedName>
</protein>
<proteinExistence type="inferred from homology"/>
<dbReference type="EMBL" id="BA000004">
    <property type="protein sequence ID" value="BAB05248.1"/>
    <property type="molecule type" value="Genomic_DNA"/>
</dbReference>
<dbReference type="PIR" id="A83841">
    <property type="entry name" value="A83841"/>
</dbReference>
<dbReference type="RefSeq" id="WP_010897694.1">
    <property type="nucleotide sequence ID" value="NC_002570.2"/>
</dbReference>
<dbReference type="SMR" id="Q9KCP0"/>
<dbReference type="STRING" id="272558.gene:10727427"/>
<dbReference type="KEGG" id="bha:BH1529"/>
<dbReference type="eggNOG" id="COG4974">
    <property type="taxonomic scope" value="Bacteria"/>
</dbReference>
<dbReference type="HOGENOM" id="CLU_027562_9_6_9"/>
<dbReference type="OrthoDB" id="9801717at2"/>
<dbReference type="Proteomes" id="UP000001258">
    <property type="component" value="Chromosome"/>
</dbReference>
<dbReference type="GO" id="GO:0005737">
    <property type="term" value="C:cytoplasm"/>
    <property type="evidence" value="ECO:0007669"/>
    <property type="project" value="UniProtKB-SubCell"/>
</dbReference>
<dbReference type="GO" id="GO:0003677">
    <property type="term" value="F:DNA binding"/>
    <property type="evidence" value="ECO:0007669"/>
    <property type="project" value="UniProtKB-KW"/>
</dbReference>
<dbReference type="GO" id="GO:0009037">
    <property type="term" value="F:tyrosine-based site-specific recombinase activity"/>
    <property type="evidence" value="ECO:0007669"/>
    <property type="project" value="UniProtKB-UniRule"/>
</dbReference>
<dbReference type="GO" id="GO:0051301">
    <property type="term" value="P:cell division"/>
    <property type="evidence" value="ECO:0007669"/>
    <property type="project" value="UniProtKB-KW"/>
</dbReference>
<dbReference type="GO" id="GO:0007059">
    <property type="term" value="P:chromosome segregation"/>
    <property type="evidence" value="ECO:0007669"/>
    <property type="project" value="UniProtKB-UniRule"/>
</dbReference>
<dbReference type="GO" id="GO:0006313">
    <property type="term" value="P:DNA transposition"/>
    <property type="evidence" value="ECO:0007669"/>
    <property type="project" value="UniProtKB-UniRule"/>
</dbReference>
<dbReference type="CDD" id="cd00798">
    <property type="entry name" value="INT_XerDC_C"/>
    <property type="match status" value="1"/>
</dbReference>
<dbReference type="Gene3D" id="1.10.150.130">
    <property type="match status" value="1"/>
</dbReference>
<dbReference type="Gene3D" id="1.10.443.10">
    <property type="entry name" value="Intergrase catalytic core"/>
    <property type="match status" value="1"/>
</dbReference>
<dbReference type="HAMAP" id="MF_01808">
    <property type="entry name" value="Recomb_XerC_XerD"/>
    <property type="match status" value="1"/>
</dbReference>
<dbReference type="HAMAP" id="MF_01807">
    <property type="entry name" value="Recomb_XerD"/>
    <property type="match status" value="1"/>
</dbReference>
<dbReference type="InterPro" id="IPR044068">
    <property type="entry name" value="CB"/>
</dbReference>
<dbReference type="InterPro" id="IPR011010">
    <property type="entry name" value="DNA_brk_join_enz"/>
</dbReference>
<dbReference type="InterPro" id="IPR013762">
    <property type="entry name" value="Integrase-like_cat_sf"/>
</dbReference>
<dbReference type="InterPro" id="IPR002104">
    <property type="entry name" value="Integrase_catalytic"/>
</dbReference>
<dbReference type="InterPro" id="IPR010998">
    <property type="entry name" value="Integrase_recombinase_N"/>
</dbReference>
<dbReference type="InterPro" id="IPR004107">
    <property type="entry name" value="Integrase_SAM-like_N"/>
</dbReference>
<dbReference type="InterPro" id="IPR011931">
    <property type="entry name" value="Recomb_XerC"/>
</dbReference>
<dbReference type="InterPro" id="IPR011932">
    <property type="entry name" value="Recomb_XerD"/>
</dbReference>
<dbReference type="InterPro" id="IPR023009">
    <property type="entry name" value="Tyrosine_recombinase_XerC/XerD"/>
</dbReference>
<dbReference type="InterPro" id="IPR050090">
    <property type="entry name" value="Tyrosine_recombinase_XerCD"/>
</dbReference>
<dbReference type="NCBIfam" id="NF001399">
    <property type="entry name" value="PRK00283.1"/>
    <property type="match status" value="1"/>
</dbReference>
<dbReference type="NCBIfam" id="NF040815">
    <property type="entry name" value="recomb_XerA_Arch"/>
    <property type="match status" value="1"/>
</dbReference>
<dbReference type="NCBIfam" id="TIGR02224">
    <property type="entry name" value="recomb_XerC"/>
    <property type="match status" value="1"/>
</dbReference>
<dbReference type="NCBIfam" id="TIGR02225">
    <property type="entry name" value="recomb_XerD"/>
    <property type="match status" value="1"/>
</dbReference>
<dbReference type="PANTHER" id="PTHR30349">
    <property type="entry name" value="PHAGE INTEGRASE-RELATED"/>
    <property type="match status" value="1"/>
</dbReference>
<dbReference type="PANTHER" id="PTHR30349:SF81">
    <property type="entry name" value="TYROSINE RECOMBINASE XERC"/>
    <property type="match status" value="1"/>
</dbReference>
<dbReference type="Pfam" id="PF02899">
    <property type="entry name" value="Phage_int_SAM_1"/>
    <property type="match status" value="1"/>
</dbReference>
<dbReference type="Pfam" id="PF00589">
    <property type="entry name" value="Phage_integrase"/>
    <property type="match status" value="1"/>
</dbReference>
<dbReference type="SUPFAM" id="SSF56349">
    <property type="entry name" value="DNA breaking-rejoining enzymes"/>
    <property type="match status" value="1"/>
</dbReference>
<dbReference type="PROSITE" id="PS51900">
    <property type="entry name" value="CB"/>
    <property type="match status" value="1"/>
</dbReference>
<dbReference type="PROSITE" id="PS51898">
    <property type="entry name" value="TYR_RECOMBINASE"/>
    <property type="match status" value="1"/>
</dbReference>
<sequence>METVNNNLQQFLHFQKVERGLSNNTIQSYGRDLKQYIQYVERVEEIRSARNITRETILHYLYHLREQGRAETSIARAVAAIRSFHQFLLREKLSDSDPTVHVEIPKATKRLPKALTIEEVEALLNSPQGRDPFSLRNKAMLELLYATGMRVSELIGLTLSDIHLSMGFVRCLGKGNKERIIPIGQVATEAVESYLANGRGKLMKKQSHDHVFVNHHGRPLSRQGFWKMLKQLAKNVNIDKPLTPHTLRHSFATHLLENGADLRAVQEMLGHADISTTQIYTHVTKTRMRDVYAHFHPRA</sequence>
<accession>Q9KCP0</accession>
<evidence type="ECO:0000255" key="1">
    <source>
        <dbReference type="HAMAP-Rule" id="MF_01807"/>
    </source>
</evidence>
<evidence type="ECO:0000255" key="2">
    <source>
        <dbReference type="PROSITE-ProRule" id="PRU01246"/>
    </source>
</evidence>
<evidence type="ECO:0000255" key="3">
    <source>
        <dbReference type="PROSITE-ProRule" id="PRU01248"/>
    </source>
</evidence>
<comment type="function">
    <text evidence="1">Site-specific tyrosine recombinase, which acts by catalyzing the cutting and rejoining of the recombining DNA molecules. The XerC-XerD complex is essential to convert dimers of the bacterial chromosome into monomers to permit their segregation at cell division. It also contributes to the segregational stability of plasmids.</text>
</comment>
<comment type="subunit">
    <text evidence="1">Forms a cyclic heterotetrameric complex composed of two molecules of XerC and two molecules of XerD.</text>
</comment>
<comment type="subcellular location">
    <subcellularLocation>
        <location evidence="1">Cytoplasm</location>
    </subcellularLocation>
</comment>
<comment type="similarity">
    <text evidence="1">Belongs to the 'phage' integrase family. XerD subfamily.</text>
</comment>
<name>XERD_HALH5</name>
<feature type="chain" id="PRO_0000095370" description="Tyrosine recombinase XerD">
    <location>
        <begin position="1"/>
        <end position="299"/>
    </location>
</feature>
<feature type="domain" description="Core-binding (CB)" evidence="3">
    <location>
        <begin position="2"/>
        <end position="89"/>
    </location>
</feature>
<feature type="domain" description="Tyr recombinase" evidence="2">
    <location>
        <begin position="110"/>
        <end position="293"/>
    </location>
</feature>
<feature type="active site" evidence="1">
    <location>
        <position position="150"/>
    </location>
</feature>
<feature type="active site" evidence="1">
    <location>
        <position position="174"/>
    </location>
</feature>
<feature type="active site" evidence="1">
    <location>
        <position position="245"/>
    </location>
</feature>
<feature type="active site" evidence="1">
    <location>
        <position position="248"/>
    </location>
</feature>
<feature type="active site" evidence="1">
    <location>
        <position position="271"/>
    </location>
</feature>
<feature type="active site" description="O-(3'-phospho-DNA)-tyrosine intermediate" evidence="1">
    <location>
        <position position="280"/>
    </location>
</feature>
<gene>
    <name evidence="1" type="primary">xerD</name>
    <name type="ordered locus">BH1529</name>
</gene>
<reference key="1">
    <citation type="journal article" date="2000" name="Nucleic Acids Res.">
        <title>Complete genome sequence of the alkaliphilic bacterium Bacillus halodurans and genomic sequence comparison with Bacillus subtilis.</title>
        <authorList>
            <person name="Takami H."/>
            <person name="Nakasone K."/>
            <person name="Takaki Y."/>
            <person name="Maeno G."/>
            <person name="Sasaki R."/>
            <person name="Masui N."/>
            <person name="Fuji F."/>
            <person name="Hirama C."/>
            <person name="Nakamura Y."/>
            <person name="Ogasawara N."/>
            <person name="Kuhara S."/>
            <person name="Horikoshi K."/>
        </authorList>
    </citation>
    <scope>NUCLEOTIDE SEQUENCE [LARGE SCALE GENOMIC DNA]</scope>
    <source>
        <strain>ATCC BAA-125 / DSM 18197 / FERM 7344 / JCM 9153 / C-125</strain>
    </source>
</reference>
<organism>
    <name type="scientific">Halalkalibacterium halodurans (strain ATCC BAA-125 / DSM 18197 / FERM 7344 / JCM 9153 / C-125)</name>
    <name type="common">Bacillus halodurans</name>
    <dbReference type="NCBI Taxonomy" id="272558"/>
    <lineage>
        <taxon>Bacteria</taxon>
        <taxon>Bacillati</taxon>
        <taxon>Bacillota</taxon>
        <taxon>Bacilli</taxon>
        <taxon>Bacillales</taxon>
        <taxon>Bacillaceae</taxon>
        <taxon>Halalkalibacterium (ex Joshi et al. 2022)</taxon>
    </lineage>
</organism>